<organismHost>
    <name type="scientific">Mammalia</name>
    <dbReference type="NCBI Taxonomy" id="40674"/>
</organismHost>
<keyword id="KW-0002">3D-structure</keyword>
<keyword id="KW-0024">Alternative initiation</keyword>
<keyword id="KW-0175">Coiled coil</keyword>
<keyword id="KW-1035">Host cytoplasm</keyword>
<keyword id="KW-1185">Reference proteome</keyword>
<keyword id="KW-0694">RNA-binding</keyword>
<comment type="function">
    <text evidence="6 7">Non-structural protein implicated with protein sigma-NS in forming the matrix of viral factories, which are large inclusions in the host cytoplasm where replication intermediates are assembled and viral RNA replication takes place (PubMed:15858004). Together with mu-2, recruits the other core proteins to these factories (PubMed:14747553).</text>
</comment>
<comment type="subunit">
    <text evidence="5 6">Interacts with mu-2 (PubMed:12663763). Interacts with sigma-NS; in viral factories (PubMed:12663763). Interacts with the inner capsid proteins lambda-1 and sigma-2, and outer capsid protein lambda-2; in viral factories (PubMed:14747553).</text>
</comment>
<comment type="subcellular location">
    <subcellularLocation>
        <location evidence="8">Host cytoplasm</location>
    </subcellularLocation>
    <text evidence="3 8">Localizes to the viral factories formed by mu-NS and sigma-NS (PubMed:28794026). Localizes to the host stress granules (By similarity).</text>
</comment>
<comment type="alternative products">
    <event type="alternative initiation"/>
    <isoform>
        <id>Q9PY83-1</id>
        <name>mu-NS</name>
        <sequence type="displayed"/>
    </isoform>
    <isoform>
        <id>Q9PY83-2</id>
        <name>mu-NSC</name>
        <sequence type="described" ref="VSP_034870"/>
    </isoform>
</comment>
<comment type="domain">
    <text evidence="7">The C-terminus is involved in the formation of factory-like inclusions.</text>
</comment>
<comment type="PTM">
    <text evidence="1">The N-terminus is blocked.</text>
</comment>
<comment type="miscellaneous">
    <molecule>Isoform mu-NSC</molecule>
    <text evidence="9">It is unsure whether Met-41 is the initiator.</text>
</comment>
<comment type="similarity">
    <text evidence="9">Belongs to the orthoreovirus mu-NS protein family.</text>
</comment>
<dbReference type="EMBL" id="AF174382">
    <property type="protein sequence ID" value="AAF13169.1"/>
    <property type="molecule type" value="mRNA"/>
</dbReference>
<dbReference type="PDB" id="7BN1">
    <property type="method" value="X-ray"/>
    <property type="resolution" value="1.97 A"/>
    <property type="chains" value="E/F=705-720"/>
</dbReference>
<dbReference type="PDBsum" id="7BN1"/>
<dbReference type="SMR" id="Q9PY83"/>
<dbReference type="IntAct" id="Q9PY83">
    <property type="interactions" value="2"/>
</dbReference>
<dbReference type="Proteomes" id="UP000007253">
    <property type="component" value="Genome"/>
</dbReference>
<dbReference type="GO" id="GO:0039714">
    <property type="term" value="C:cytoplasmic viral factory"/>
    <property type="evidence" value="ECO:0000314"/>
    <property type="project" value="UniProtKB"/>
</dbReference>
<dbReference type="GO" id="GO:0003723">
    <property type="term" value="F:RNA binding"/>
    <property type="evidence" value="ECO:0007669"/>
    <property type="project" value="UniProtKB-KW"/>
</dbReference>
<sequence length="721" mass="80166">MASFKGFSVNTVPVSKAKRDISSLAATPGIRSQPFTPSVDMSQSREFLTKAIEQGSMSIPYQHVNVPKVDRKVVSLVVRPFSSGAFSISGVISPAHAYLLDCLPQLEQAMAFVASPESFQASDVAKRFAIKPGMSLQDAITAFINFVSAMLKMTVTRQNFDVIVAEIERLASTSVSVRTEEAKVADEELMLFGLDHRGPQQLDISNAKGIMKAADIQATHDVHLAPGVGNIDPEIYNEGRFMFMQHKPLAADQSYFTLETADYFKIYPTYDEHDSRMADQKQSGLILCTKDEVLAEQTIFKLDAPDDKTVHLLDRDDDHVVARFTKVFIEDVAPGHHAAQRSGQRSVLDDLYANTQVVSITSAALKWVVKHGVSDGIVNRKNVKVCVGFDPLYTLSTHNGVSLCALLMDEKLSVLNSACRMTLRSLMKTGRDADAHRAFQRVLSQGYASLMCYYHPSRKLAYGEVLFLERSSDMVDGIKLQLDASRQCHECPVLQQKVVELEKQIIMQKSIQSDPTPMALQPLLSQLRELSSEVTRLQMELSRTQSLNAQLEADAKSAQACSLDMYLRHHTCINGHTKEDELLDAVRVAPDVRKEIMEKRGEVRRGWCERISKEAAAKCQTVIDDLTQMNGKQAREITELRESAENYEKQIAELVGTITQNQMTYQQELQALVAKNVELDTMNQRQAKSLRITPSLLSATPIDSVDGAADLIDFSVPTDEL</sequence>
<protein>
    <recommendedName>
        <fullName>Protein mu-NS</fullName>
        <shortName>MuNS</shortName>
    </recommendedName>
</protein>
<gene>
    <name type="primary">M3</name>
</gene>
<evidence type="ECO:0000250" key="1"/>
<evidence type="ECO:0000250" key="2">
    <source>
        <dbReference type="UniProtKB" id="P12419"/>
    </source>
</evidence>
<evidence type="ECO:0000250" key="3">
    <source>
        <dbReference type="UniProtKB" id="Q9PY82"/>
    </source>
</evidence>
<evidence type="ECO:0000255" key="4"/>
<evidence type="ECO:0000269" key="5">
    <source>
    </source>
</evidence>
<evidence type="ECO:0000269" key="6">
    <source>
    </source>
</evidence>
<evidence type="ECO:0000269" key="7">
    <source>
    </source>
</evidence>
<evidence type="ECO:0000269" key="8">
    <source>
    </source>
</evidence>
<evidence type="ECO:0000305" key="9"/>
<accession>Q9PY83</accession>
<reference key="1">
    <citation type="journal article" date="1999" name="Virology">
        <title>Mammalian reovirus M3 gene sequences and conservation of coiled-coil motifs near the carboxyl terminus of the microNS protein.</title>
        <authorList>
            <person name="McCutcheon A.M."/>
            <person name="Broering T.J."/>
            <person name="Nibert M.L."/>
        </authorList>
    </citation>
    <scope>NUCLEOTIDE SEQUENCE [GENOMIC RNA]</scope>
    <scope>ALTERNATIVE INITIATION</scope>
</reference>
<reference key="2">
    <citation type="journal article" date="2003" name="J. Virol.">
        <title>Reovirus sigma NS protein localizes to inclusions through an association requiring the mu NS amino terminus.</title>
        <authorList>
            <person name="Miller C.L."/>
            <person name="Broering T.J."/>
            <person name="Parker J.S.L."/>
            <person name="Arnold M.M."/>
            <person name="Nibert M.L."/>
        </authorList>
    </citation>
    <scope>INTERACTION WITH PROTEIN SIGMA-NS AND PROTEIN MU-2</scope>
</reference>
<reference key="3">
    <citation type="journal article" date="2004" name="J. Virol.">
        <title>Reovirus nonstructural protein mu NS recruits viral core surface proteins and entering core particles to factory-like inclusions.</title>
        <authorList>
            <person name="Broering T.J."/>
            <person name="Kim J."/>
            <person name="Miller C.L."/>
            <person name="Piggott C.D."/>
            <person name="Dinoso J.B."/>
            <person name="Nibert M.L."/>
            <person name="Parker J.S.L."/>
        </authorList>
    </citation>
    <scope>FUNCTION</scope>
    <scope>INTERACTION WITH PROTEIN LAMBDA-1; PROTEIN LAMBDA-2 AND PROTEIN SIGMA-2</scope>
</reference>
<reference key="4">
    <citation type="journal article" date="2005" name="J. Virol.">
        <title>Carboxyl-proximal regions of reovirus nonstructural protein muNS necessary and sufficient for forming factory-like inclusions.</title>
        <authorList>
            <person name="Broering T.J."/>
            <person name="Arnold M.M."/>
            <person name="Miller C.L."/>
            <person name="Hurt J.A."/>
            <person name="Joyce P.L."/>
            <person name="Nibert M.L."/>
        </authorList>
    </citation>
    <scope>FUNCTION</scope>
    <scope>MUTAGENESIS OF CYS-561; HIS-569; HIS-570; CYS-572 AND HIS-576</scope>
</reference>
<reference key="5">
    <citation type="journal article" date="2017" name="J. Virol.">
        <title>Mammalian Orthoreovirus Factories Modulate Stress Granule Protein Localization by Interaction with G3BP1.</title>
        <authorList>
            <person name="Choudhury P."/>
            <person name="Bussiere L.D."/>
            <person name="Miller C.L."/>
        </authorList>
    </citation>
    <scope>SUBCELLULAR LOCATION</scope>
</reference>
<feature type="chain" id="PRO_0000345003" description="Protein mu-NS">
    <location>
        <begin position="1"/>
        <end position="721"/>
    </location>
</feature>
<feature type="region of interest" description="RNA-binding" evidence="2">
    <location>
        <begin position="1"/>
        <end position="38"/>
    </location>
</feature>
<feature type="region of interest" description="Interaction with sigma-NS" evidence="5">
    <location>
        <begin position="1"/>
        <end position="13"/>
    </location>
</feature>
<feature type="region of interest" description="Interaction with mu-2" evidence="5">
    <location>
        <begin position="14"/>
        <end position="40"/>
    </location>
</feature>
<feature type="region of interest" description="Involved in the formation of factory-like inclusions" evidence="7">
    <location>
        <begin position="471"/>
        <end position="721"/>
    </location>
</feature>
<feature type="coiled-coil region" evidence="4">
    <location>
        <begin position="523"/>
        <end position="560"/>
    </location>
</feature>
<feature type="coiled-coil region" evidence="4">
    <location>
        <begin position="628"/>
        <end position="686"/>
    </location>
</feature>
<feature type="site" description="Important for the formation of viral factories" evidence="7">
    <location>
        <position position="570"/>
    </location>
</feature>
<feature type="site" description="Important for the formation of viral factories" evidence="7">
    <location>
        <position position="572"/>
    </location>
</feature>
<feature type="splice variant" id="VSP_034870" description="In isoform mu-NSC." evidence="9">
    <location>
        <begin position="1"/>
        <end position="40"/>
    </location>
</feature>
<feature type="mutagenesis site" description="Diffusely localized in the cytoplasm." evidence="7">
    <original>C</original>
    <variation>S</variation>
    <location>
        <position position="561"/>
    </location>
</feature>
<feature type="mutagenesis site" description="Diffusely localized in the cytoplasm." evidence="7">
    <original>H</original>
    <variation>Q</variation>
    <location>
        <position position="569"/>
    </location>
</feature>
<feature type="mutagenesis site" description="No effect on subcellular localization." evidence="7">
    <original>H</original>
    <variation>Q</variation>
    <location>
        <position position="570"/>
    </location>
</feature>
<feature type="mutagenesis site" description="No effect on subcellular localization." evidence="7">
    <original>C</original>
    <variation>S</variation>
    <location>
        <position position="572"/>
    </location>
</feature>
<feature type="mutagenesis site" description="No effect on subcellular localization." evidence="7">
    <original>H</original>
    <variation>Q</variation>
    <location>
        <position position="576"/>
    </location>
</feature>
<organism>
    <name type="scientific">Reovirus type 1 (strain Lang)</name>
    <name type="common">T1L</name>
    <name type="synonym">Mammalian orthoreovirus 1</name>
    <dbReference type="NCBI Taxonomy" id="10884"/>
    <lineage>
        <taxon>Viruses</taxon>
        <taxon>Riboviria</taxon>
        <taxon>Orthornavirae</taxon>
        <taxon>Duplornaviricota</taxon>
        <taxon>Resentoviricetes</taxon>
        <taxon>Reovirales</taxon>
        <taxon>Spinareoviridae</taxon>
        <taxon>Orthoreovirus</taxon>
        <taxon>Mammalian orthoreovirus</taxon>
    </lineage>
</organism>
<name>MUNS_REOVL</name>
<proteinExistence type="evidence at protein level"/>